<evidence type="ECO:0000255" key="1">
    <source>
        <dbReference type="HAMAP-Rule" id="MF_00402"/>
    </source>
</evidence>
<evidence type="ECO:0000305" key="2"/>
<gene>
    <name evidence="1" type="primary">rplS</name>
    <name type="ordered locus">Cthe_0765</name>
</gene>
<sequence>MDIIKAIEQEQLKKDVPDFSIGDYVRVNVKVKEGNRERIQAFEGTVIAKKGSGISETFTVRKISYGVGVERIFPVHSPRVAGIEVIRKGKVRRAKLYYLRERVGKSAKVKTKLE</sequence>
<feature type="chain" id="PRO_1000049666" description="Large ribosomal subunit protein bL19">
    <location>
        <begin position="1"/>
        <end position="114"/>
    </location>
</feature>
<protein>
    <recommendedName>
        <fullName evidence="1">Large ribosomal subunit protein bL19</fullName>
    </recommendedName>
    <alternativeName>
        <fullName evidence="2">50S ribosomal protein L19</fullName>
    </alternativeName>
</protein>
<dbReference type="EMBL" id="CP000568">
    <property type="protein sequence ID" value="ABN52000.1"/>
    <property type="molecule type" value="Genomic_DNA"/>
</dbReference>
<dbReference type="RefSeq" id="WP_004463350.1">
    <property type="nucleotide sequence ID" value="NC_009012.1"/>
</dbReference>
<dbReference type="SMR" id="A3DDH1"/>
<dbReference type="STRING" id="203119.Cthe_0765"/>
<dbReference type="GeneID" id="35805336"/>
<dbReference type="KEGG" id="cth:Cthe_0765"/>
<dbReference type="eggNOG" id="COG0335">
    <property type="taxonomic scope" value="Bacteria"/>
</dbReference>
<dbReference type="HOGENOM" id="CLU_103507_2_1_9"/>
<dbReference type="OrthoDB" id="9803541at2"/>
<dbReference type="Proteomes" id="UP000002145">
    <property type="component" value="Chromosome"/>
</dbReference>
<dbReference type="GO" id="GO:0022625">
    <property type="term" value="C:cytosolic large ribosomal subunit"/>
    <property type="evidence" value="ECO:0007669"/>
    <property type="project" value="TreeGrafter"/>
</dbReference>
<dbReference type="GO" id="GO:0003735">
    <property type="term" value="F:structural constituent of ribosome"/>
    <property type="evidence" value="ECO:0007669"/>
    <property type="project" value="InterPro"/>
</dbReference>
<dbReference type="GO" id="GO:0006412">
    <property type="term" value="P:translation"/>
    <property type="evidence" value="ECO:0007669"/>
    <property type="project" value="UniProtKB-UniRule"/>
</dbReference>
<dbReference type="FunFam" id="2.30.30.790:FF:000001">
    <property type="entry name" value="50S ribosomal protein L19"/>
    <property type="match status" value="1"/>
</dbReference>
<dbReference type="Gene3D" id="2.30.30.790">
    <property type="match status" value="1"/>
</dbReference>
<dbReference type="HAMAP" id="MF_00402">
    <property type="entry name" value="Ribosomal_bL19"/>
    <property type="match status" value="1"/>
</dbReference>
<dbReference type="InterPro" id="IPR001857">
    <property type="entry name" value="Ribosomal_bL19"/>
</dbReference>
<dbReference type="InterPro" id="IPR018257">
    <property type="entry name" value="Ribosomal_bL19_CS"/>
</dbReference>
<dbReference type="InterPro" id="IPR038657">
    <property type="entry name" value="Ribosomal_bL19_sf"/>
</dbReference>
<dbReference type="InterPro" id="IPR008991">
    <property type="entry name" value="Translation_prot_SH3-like_sf"/>
</dbReference>
<dbReference type="NCBIfam" id="TIGR01024">
    <property type="entry name" value="rplS_bact"/>
    <property type="match status" value="1"/>
</dbReference>
<dbReference type="PANTHER" id="PTHR15680:SF9">
    <property type="entry name" value="LARGE RIBOSOMAL SUBUNIT PROTEIN BL19M"/>
    <property type="match status" value="1"/>
</dbReference>
<dbReference type="PANTHER" id="PTHR15680">
    <property type="entry name" value="RIBOSOMAL PROTEIN L19"/>
    <property type="match status" value="1"/>
</dbReference>
<dbReference type="Pfam" id="PF01245">
    <property type="entry name" value="Ribosomal_L19"/>
    <property type="match status" value="1"/>
</dbReference>
<dbReference type="PIRSF" id="PIRSF002191">
    <property type="entry name" value="Ribosomal_L19"/>
    <property type="match status" value="1"/>
</dbReference>
<dbReference type="PRINTS" id="PR00061">
    <property type="entry name" value="RIBOSOMALL19"/>
</dbReference>
<dbReference type="SUPFAM" id="SSF50104">
    <property type="entry name" value="Translation proteins SH3-like domain"/>
    <property type="match status" value="1"/>
</dbReference>
<dbReference type="PROSITE" id="PS01015">
    <property type="entry name" value="RIBOSOMAL_L19"/>
    <property type="match status" value="1"/>
</dbReference>
<accession>A3DDH1</accession>
<keyword id="KW-1185">Reference proteome</keyword>
<keyword id="KW-0687">Ribonucleoprotein</keyword>
<keyword id="KW-0689">Ribosomal protein</keyword>
<reference key="1">
    <citation type="submission" date="2007-02" db="EMBL/GenBank/DDBJ databases">
        <title>Complete sequence of Clostridium thermocellum ATCC 27405.</title>
        <authorList>
            <consortium name="US DOE Joint Genome Institute"/>
            <person name="Copeland A."/>
            <person name="Lucas S."/>
            <person name="Lapidus A."/>
            <person name="Barry K."/>
            <person name="Detter J.C."/>
            <person name="Glavina del Rio T."/>
            <person name="Hammon N."/>
            <person name="Israni S."/>
            <person name="Dalin E."/>
            <person name="Tice H."/>
            <person name="Pitluck S."/>
            <person name="Chertkov O."/>
            <person name="Brettin T."/>
            <person name="Bruce D."/>
            <person name="Han C."/>
            <person name="Tapia R."/>
            <person name="Gilna P."/>
            <person name="Schmutz J."/>
            <person name="Larimer F."/>
            <person name="Land M."/>
            <person name="Hauser L."/>
            <person name="Kyrpides N."/>
            <person name="Mikhailova N."/>
            <person name="Wu J.H.D."/>
            <person name="Newcomb M."/>
            <person name="Richardson P."/>
        </authorList>
    </citation>
    <scope>NUCLEOTIDE SEQUENCE [LARGE SCALE GENOMIC DNA]</scope>
    <source>
        <strain>ATCC 27405 / DSM 1237 / JCM 9322 / NBRC 103400 / NCIMB 10682 / NRRL B-4536 / VPI 7372</strain>
    </source>
</reference>
<name>RL19_ACET2</name>
<comment type="function">
    <text evidence="1">This protein is located at the 30S-50S ribosomal subunit interface and may play a role in the structure and function of the aminoacyl-tRNA binding site.</text>
</comment>
<comment type="similarity">
    <text evidence="1">Belongs to the bacterial ribosomal protein bL19 family.</text>
</comment>
<organism>
    <name type="scientific">Acetivibrio thermocellus (strain ATCC 27405 / DSM 1237 / JCM 9322 / NBRC 103400 / NCIMB 10682 / NRRL B-4536 / VPI 7372)</name>
    <name type="common">Clostridium thermocellum</name>
    <dbReference type="NCBI Taxonomy" id="203119"/>
    <lineage>
        <taxon>Bacteria</taxon>
        <taxon>Bacillati</taxon>
        <taxon>Bacillota</taxon>
        <taxon>Clostridia</taxon>
        <taxon>Eubacteriales</taxon>
        <taxon>Oscillospiraceae</taxon>
        <taxon>Acetivibrio</taxon>
    </lineage>
</organism>
<proteinExistence type="inferred from homology"/>